<reference key="1">
    <citation type="journal article" date="2007" name="Nature">
        <title>Evolution of genes and genomes on the Drosophila phylogeny.</title>
        <authorList>
            <consortium name="Drosophila 12 genomes consortium"/>
        </authorList>
    </citation>
    <scope>NUCLEOTIDE SEQUENCE [LARGE SCALE GENOMIC DNA]</scope>
    <source>
        <strain>Rob3c / Tucson 14021-0248.25</strain>
    </source>
</reference>
<evidence type="ECO:0000255" key="1">
    <source>
        <dbReference type="HAMAP-Rule" id="MF_03119"/>
    </source>
</evidence>
<name>MTNA_DROSE</name>
<proteinExistence type="inferred from homology"/>
<accession>B4I029</accession>
<comment type="function">
    <text evidence="1">Catalyzes the interconversion of methylthioribose-1-phosphate (MTR-1-P) into methylthioribulose-1-phosphate (MTRu-1-P).</text>
</comment>
<comment type="catalytic activity">
    <reaction evidence="1">
        <text>5-(methylsulfanyl)-alpha-D-ribose 1-phosphate = 5-(methylsulfanyl)-D-ribulose 1-phosphate</text>
        <dbReference type="Rhea" id="RHEA:19989"/>
        <dbReference type="ChEBI" id="CHEBI:58533"/>
        <dbReference type="ChEBI" id="CHEBI:58548"/>
        <dbReference type="EC" id="5.3.1.23"/>
    </reaction>
</comment>
<comment type="pathway">
    <text evidence="1">Amino-acid biosynthesis; L-methionine biosynthesis via salvage pathway; L-methionine from S-methyl-5-thio-alpha-D-ribose 1-phosphate: step 1/6.</text>
</comment>
<comment type="subcellular location">
    <subcellularLocation>
        <location evidence="1">Cytoplasm</location>
    </subcellularLocation>
    <subcellularLocation>
        <location evidence="1">Nucleus</location>
    </subcellularLocation>
</comment>
<comment type="similarity">
    <text evidence="1">Belongs to the eIF-2B alpha/beta/delta subunits family. MtnA subfamily.</text>
</comment>
<feature type="chain" id="PRO_0000401982" description="Methylthioribose-1-phosphate isomerase">
    <location>
        <begin position="1"/>
        <end position="364"/>
    </location>
</feature>
<feature type="active site" description="Proton donor" evidence="1">
    <location>
        <position position="254"/>
    </location>
</feature>
<feature type="site" description="Transition state stabilizer" evidence="1">
    <location>
        <position position="174"/>
    </location>
</feature>
<sequence>MSLQSIKYSRGSLEILDQLLLPGQSKYVVVRGVEDGWKVINKMQVRGAPAIAIVGCLSLAVEINPEDFENKKSLRQEIEGKLNYLVSARPTAVNMKIAADELITLANELYKDEAIDVTQMKHRFLDATEAMLKKDIADNRAIGANGAQAILQRVAKAGKTTAGTTGSVRVLTHCNTGSLATAGYGTALGVVRQLAELGKLEHVYCTETRPYNQGARLTAYELVHEKFPATLVLDSMVAALLRAKNVAAVVVGADRVASNGDTANKIGTYQIAVVAKHHDVPFYVAAPLTSIDLAIPGGDHIIIEERPDREMTHVGEHRIAAPGINCWNPAFDVTPASLITGIITERGVFKPAELKEAITKLLES</sequence>
<keyword id="KW-0028">Amino-acid biosynthesis</keyword>
<keyword id="KW-0963">Cytoplasm</keyword>
<keyword id="KW-0413">Isomerase</keyword>
<keyword id="KW-0486">Methionine biosynthesis</keyword>
<keyword id="KW-0539">Nucleus</keyword>
<keyword id="KW-1185">Reference proteome</keyword>
<protein>
    <recommendedName>
        <fullName evidence="1">Methylthioribose-1-phosphate isomerase</fullName>
        <shortName evidence="1">M1Pi</shortName>
        <shortName evidence="1">MTR-1-P isomerase</shortName>
        <ecNumber evidence="1">5.3.1.23</ecNumber>
    </recommendedName>
    <alternativeName>
        <fullName evidence="1">S-methyl-5-thioribose-1-phosphate isomerase</fullName>
    </alternativeName>
    <alternativeName>
        <fullName evidence="1">Translation initiation factor eIF-2B subunit alpha/beta/delta-like protein</fullName>
    </alternativeName>
</protein>
<dbReference type="EC" id="5.3.1.23" evidence="1"/>
<dbReference type="EMBL" id="CH480819">
    <property type="protein sequence ID" value="EDW53636.1"/>
    <property type="molecule type" value="Genomic_DNA"/>
</dbReference>
<dbReference type="SMR" id="B4I029"/>
<dbReference type="STRING" id="7238.B4I029"/>
<dbReference type="EnsemblMetazoa" id="FBtr0195070">
    <property type="protein sequence ID" value="FBpp0193562"/>
    <property type="gene ID" value="FBgn0167026"/>
</dbReference>
<dbReference type="EnsemblMetazoa" id="XM_002037441.2">
    <property type="protein sequence ID" value="XP_002037477.1"/>
    <property type="gene ID" value="LOC6612986"/>
</dbReference>
<dbReference type="EnsemblMetazoa" id="XM_032722419.1">
    <property type="protein sequence ID" value="XP_032578310.1"/>
    <property type="gene ID" value="LOC6612986"/>
</dbReference>
<dbReference type="GeneID" id="6612986"/>
<dbReference type="KEGG" id="dse:6612986"/>
<dbReference type="HOGENOM" id="CLU_016218_1_3_1"/>
<dbReference type="OMA" id="CETRPLN"/>
<dbReference type="PhylomeDB" id="B4I029"/>
<dbReference type="UniPathway" id="UPA00904">
    <property type="reaction ID" value="UER00874"/>
</dbReference>
<dbReference type="Proteomes" id="UP000001292">
    <property type="component" value="Unassembled WGS sequence"/>
</dbReference>
<dbReference type="GO" id="GO:0005737">
    <property type="term" value="C:cytoplasm"/>
    <property type="evidence" value="ECO:0007669"/>
    <property type="project" value="UniProtKB-SubCell"/>
</dbReference>
<dbReference type="GO" id="GO:0005634">
    <property type="term" value="C:nucleus"/>
    <property type="evidence" value="ECO:0007669"/>
    <property type="project" value="UniProtKB-SubCell"/>
</dbReference>
<dbReference type="GO" id="GO:0046523">
    <property type="term" value="F:S-methyl-5-thioribose-1-phosphate isomerase activity"/>
    <property type="evidence" value="ECO:0007669"/>
    <property type="project" value="UniProtKB-UniRule"/>
</dbReference>
<dbReference type="GO" id="GO:0019509">
    <property type="term" value="P:L-methionine salvage from methylthioadenosine"/>
    <property type="evidence" value="ECO:0007669"/>
    <property type="project" value="UniProtKB-UniRule"/>
</dbReference>
<dbReference type="FunFam" id="1.20.120.420:FF:000010">
    <property type="entry name" value="Methylthioribose-1-phosphate isomerase"/>
    <property type="match status" value="1"/>
</dbReference>
<dbReference type="FunFam" id="3.40.50.10470:FF:000003">
    <property type="entry name" value="Methylthioribose-1-phosphate isomerase"/>
    <property type="match status" value="1"/>
</dbReference>
<dbReference type="Gene3D" id="1.20.120.420">
    <property type="entry name" value="translation initiation factor eif-2b, domain 1"/>
    <property type="match status" value="1"/>
</dbReference>
<dbReference type="Gene3D" id="3.40.50.10470">
    <property type="entry name" value="Translation initiation factor eif-2b, domain 2"/>
    <property type="match status" value="1"/>
</dbReference>
<dbReference type="HAMAP" id="MF_01678">
    <property type="entry name" value="Salvage_MtnA"/>
    <property type="match status" value="1"/>
</dbReference>
<dbReference type="InterPro" id="IPR000649">
    <property type="entry name" value="IF-2B-related"/>
</dbReference>
<dbReference type="InterPro" id="IPR005251">
    <property type="entry name" value="IF-M1Pi"/>
</dbReference>
<dbReference type="InterPro" id="IPR042529">
    <property type="entry name" value="IF_2B-like_C"/>
</dbReference>
<dbReference type="InterPro" id="IPR011559">
    <property type="entry name" value="Initiation_fac_2B_a/b/d"/>
</dbReference>
<dbReference type="InterPro" id="IPR027363">
    <property type="entry name" value="M1Pi_N"/>
</dbReference>
<dbReference type="InterPro" id="IPR037171">
    <property type="entry name" value="NagB/RpiA_transferase-like"/>
</dbReference>
<dbReference type="NCBIfam" id="TIGR00524">
    <property type="entry name" value="eIF-2B_rel"/>
    <property type="match status" value="1"/>
</dbReference>
<dbReference type="NCBIfam" id="NF004326">
    <property type="entry name" value="PRK05720.1"/>
    <property type="match status" value="1"/>
</dbReference>
<dbReference type="NCBIfam" id="TIGR00512">
    <property type="entry name" value="salvage_mtnA"/>
    <property type="match status" value="1"/>
</dbReference>
<dbReference type="PANTHER" id="PTHR43475">
    <property type="entry name" value="METHYLTHIORIBOSE-1-PHOSPHATE ISOMERASE"/>
    <property type="match status" value="1"/>
</dbReference>
<dbReference type="PANTHER" id="PTHR43475:SF1">
    <property type="entry name" value="METHYLTHIORIBOSE-1-PHOSPHATE ISOMERASE"/>
    <property type="match status" value="1"/>
</dbReference>
<dbReference type="Pfam" id="PF01008">
    <property type="entry name" value="IF-2B"/>
    <property type="match status" value="1"/>
</dbReference>
<dbReference type="SUPFAM" id="SSF100950">
    <property type="entry name" value="NagB/RpiA/CoA transferase-like"/>
    <property type="match status" value="1"/>
</dbReference>
<organism>
    <name type="scientific">Drosophila sechellia</name>
    <name type="common">Fruit fly</name>
    <dbReference type="NCBI Taxonomy" id="7238"/>
    <lineage>
        <taxon>Eukaryota</taxon>
        <taxon>Metazoa</taxon>
        <taxon>Ecdysozoa</taxon>
        <taxon>Arthropoda</taxon>
        <taxon>Hexapoda</taxon>
        <taxon>Insecta</taxon>
        <taxon>Pterygota</taxon>
        <taxon>Neoptera</taxon>
        <taxon>Endopterygota</taxon>
        <taxon>Diptera</taxon>
        <taxon>Brachycera</taxon>
        <taxon>Muscomorpha</taxon>
        <taxon>Ephydroidea</taxon>
        <taxon>Drosophilidae</taxon>
        <taxon>Drosophila</taxon>
        <taxon>Sophophora</taxon>
    </lineage>
</organism>
<gene>
    <name type="ORF">GM12085</name>
</gene>